<comment type="function">
    <text evidence="1">RNA polymerase that catalyzes the synthesis of short RNA molecules used as primers for DNA polymerase during DNA replication.</text>
</comment>
<comment type="catalytic activity">
    <reaction evidence="1">
        <text>ssDNA + n NTP = ssDNA/pppN(pN)n-1 hybrid + (n-1) diphosphate.</text>
        <dbReference type="EC" id="2.7.7.101"/>
    </reaction>
</comment>
<comment type="cofactor">
    <cofactor evidence="1">
        <name>Zn(2+)</name>
        <dbReference type="ChEBI" id="CHEBI:29105"/>
    </cofactor>
    <text evidence="1">Binds 1 zinc ion per monomer.</text>
</comment>
<comment type="cofactor">
    <cofactor evidence="1">
        <name>Mg(2+)</name>
        <dbReference type="ChEBI" id="CHEBI:18420"/>
    </cofactor>
    <text evidence="1">Binds two Mg(2+) per subunit.</text>
</comment>
<comment type="subunit">
    <text evidence="1">Monomer. Interacts with DnaB.</text>
</comment>
<comment type="domain">
    <text evidence="1">Contains an N-terminal zinc-binding domain, a central core domain that contains the primase activity, and a C-terminal DnaB-binding domain.</text>
</comment>
<comment type="similarity">
    <text evidence="1">Belongs to the DnaG primase family.</text>
</comment>
<organism>
    <name type="scientific">Lactococcus lactis subsp. lactis (strain IL1403)</name>
    <name type="common">Streptococcus lactis</name>
    <dbReference type="NCBI Taxonomy" id="272623"/>
    <lineage>
        <taxon>Bacteria</taxon>
        <taxon>Bacillati</taxon>
        <taxon>Bacillota</taxon>
        <taxon>Bacilli</taxon>
        <taxon>Lactobacillales</taxon>
        <taxon>Streptococcaceae</taxon>
        <taxon>Lactococcus</taxon>
    </lineage>
</organism>
<sequence>MVSLDTEVVNDLKSKVNIADLISQYVALSRTGKNYIGLCPFHGEKTPSFNVNAEKGFYHCFGCGRSGDAIEFLKEYNQVGFVDAVKELADFAGVTLNISDDREEKNNPNAPLFEINNQAARLYNILLMSTELGERARKYLEERGITDDVIKRFNIGLAPEENDFIFKNLSNKFDEEIMAKSGLFHFSNNNVFDAFTNRIMFPITNEYGHTIGFSGRKWQENDDSKAKYINTSATTIFDKSYELWNLDKAKPTISKQHEVYLMEGFMDVIAAYKAGINNVVASMGTALTEKHIRRLKQMAKKFVLVYDGDSAGQNAIYKAIDLIGESAVQIVKVPEGLDPDEYSKNYGLKGLSALMETGRIQPIEFLIDYLRPENLANLQTQLDFIEQISPMIAKLPSITAQDAYIRKLVEILPDFEYNQVEQAVNLRRENMTITDHPVSNLDASSLTESFTDENDYSSLESVMPVDFEEAYYENNVKTQQTYRRSESAQVVQPSVQVPKLSRSEKAEEMLLHRMIYHSSVLKKFSQDENFRFVHKRYQDLFDKILLEAMVYEQIDESHLASELSDEERSLFYQIISLDLPDTASSQEIKDLVSIFSNEMEQIKFEELIQQLATAEKAGNKERVLELTLQIINQKKKL</sequence>
<gene>
    <name evidence="1" type="primary">dnaG</name>
    <name type="synonym">dnaE</name>
    <name type="ordered locus">LL0552</name>
    <name type="ORF">L0269</name>
</gene>
<protein>
    <recommendedName>
        <fullName evidence="1">DNA primase</fullName>
        <ecNumber evidence="1">2.7.7.101</ecNumber>
    </recommendedName>
</protein>
<proteinExistence type="inferred from homology"/>
<accession>Q04505</accession>
<accession>Q9CI14</accession>
<reference key="1">
    <citation type="journal article" date="2001" name="Genome Res.">
        <title>The complete genome sequence of the lactic acid bacterium Lactococcus lactis ssp. lactis IL1403.</title>
        <authorList>
            <person name="Bolotin A."/>
            <person name="Wincker P."/>
            <person name="Mauger S."/>
            <person name="Jaillon O."/>
            <person name="Malarme K."/>
            <person name="Weissenbach J."/>
            <person name="Ehrlich S.D."/>
            <person name="Sorokin A."/>
        </authorList>
    </citation>
    <scope>NUCLEOTIDE SEQUENCE [LARGE SCALE GENOMIC DNA]</scope>
    <source>
        <strain>IL1403</strain>
    </source>
</reference>
<reference key="2">
    <citation type="journal article" date="1995" name="Biosci. Biotechnol. Biochem.">
        <title>Identification and molecular analysis of Lactococcus lactis rpoD operon.</title>
        <authorList>
            <person name="Kojima T."/>
            <person name="Ishibashi N."/>
            <person name="Tanaka K."/>
            <person name="Takahashi H."/>
        </authorList>
    </citation>
    <scope>NUCLEOTIDE SEQUENCE [GENOMIC DNA] OF 1-393</scope>
    <source>
        <strain>ATCC 19435 / DSM 20481 / NCDO 604 / NCIB 6681 / NCTC 6681</strain>
    </source>
</reference>
<reference key="3">
    <citation type="journal article" date="1993" name="Biosci. Biotechnol. Biochem.">
        <title>Genetic and molecular analysis of the rpoD gene from Lactococcus lactis.</title>
        <authorList>
            <person name="Araya T."/>
            <person name="Ishibashi N."/>
            <person name="Shimamura S."/>
            <person name="Tanaka K."/>
            <person name="Takahashi H."/>
        </authorList>
    </citation>
    <scope>NUCLEOTIDE SEQUENCE [GENOMIC DNA] OF 338-637</scope>
    <source>
        <strain>ATCC 19435 / DSM 20481 / NCDO 604 / NCIB 6681 / NCTC 6681</strain>
    </source>
</reference>
<feature type="chain" id="PRO_0000180497" description="DNA primase">
    <location>
        <begin position="1"/>
        <end position="637"/>
    </location>
</feature>
<feature type="domain" description="Toprim" evidence="1">
    <location>
        <begin position="257"/>
        <end position="338"/>
    </location>
</feature>
<feature type="zinc finger region" description="CHC2-type" evidence="1">
    <location>
        <begin position="39"/>
        <end position="63"/>
    </location>
</feature>
<feature type="binding site" evidence="1">
    <location>
        <position position="263"/>
    </location>
    <ligand>
        <name>Mg(2+)</name>
        <dbReference type="ChEBI" id="CHEBI:18420"/>
        <label>1</label>
        <note>catalytic</note>
    </ligand>
</feature>
<feature type="binding site" evidence="1">
    <location>
        <position position="307"/>
    </location>
    <ligand>
        <name>Mg(2+)</name>
        <dbReference type="ChEBI" id="CHEBI:18420"/>
        <label>1</label>
        <note>catalytic</note>
    </ligand>
</feature>
<feature type="binding site" evidence="1">
    <location>
        <position position="307"/>
    </location>
    <ligand>
        <name>Mg(2+)</name>
        <dbReference type="ChEBI" id="CHEBI:18420"/>
        <label>2</label>
    </ligand>
</feature>
<feature type="binding site" evidence="1">
    <location>
        <position position="309"/>
    </location>
    <ligand>
        <name>Mg(2+)</name>
        <dbReference type="ChEBI" id="CHEBI:18420"/>
        <label>2</label>
    </ligand>
</feature>
<feature type="sequence conflict" description="In Ref. 2; BAA03516." evidence="2" ref="2">
    <original>N</original>
    <variation>K</variation>
    <location>
        <position position="190"/>
    </location>
</feature>
<feature type="sequence conflict" description="In Ref. 2; BAA03516." evidence="2" ref="2">
    <original>H</original>
    <variation>Q</variation>
    <location>
        <position position="209"/>
    </location>
</feature>
<feature type="sequence conflict" description="In Ref. 2; BAA03516." evidence="2" ref="2">
    <original>A</original>
    <variation>S</variation>
    <location>
        <position position="271"/>
    </location>
</feature>
<feature type="sequence conflict" description="In Ref. 2; BAA03516." evidence="2" ref="2">
    <original>I</original>
    <variation>V</variation>
    <location>
        <position position="292"/>
    </location>
</feature>
<feature type="sequence conflict" description="In Ref. 3; BAA01037." evidence="2" ref="3">
    <original>T</original>
    <variation>K</variation>
    <location>
        <position position="432"/>
    </location>
</feature>
<feature type="sequence conflict" description="In Ref. 3; BAA01037." evidence="2" ref="3">
    <original>A</original>
    <variation>T</variation>
    <location>
        <position position="470"/>
    </location>
</feature>
<feature type="sequence conflict" description="In Ref. 3; BAA01037." evidence="2" ref="3">
    <original>K</original>
    <variation>N</variation>
    <location>
        <position position="589"/>
    </location>
</feature>
<feature type="sequence conflict" description="In Ref. 3; BAA01037." evidence="2" ref="3">
    <original>KKKL</original>
    <variation>NEKIMIIFY</variation>
    <location>
        <begin position="634"/>
        <end position="637"/>
    </location>
</feature>
<evidence type="ECO:0000255" key="1">
    <source>
        <dbReference type="HAMAP-Rule" id="MF_00974"/>
    </source>
</evidence>
<evidence type="ECO:0000305" key="2"/>
<keyword id="KW-0235">DNA replication</keyword>
<keyword id="KW-0238">DNA-binding</keyword>
<keyword id="KW-0240">DNA-directed RNA polymerase</keyword>
<keyword id="KW-0460">Magnesium</keyword>
<keyword id="KW-0479">Metal-binding</keyword>
<keyword id="KW-0548">Nucleotidyltransferase</keyword>
<keyword id="KW-0639">Primosome</keyword>
<keyword id="KW-1185">Reference proteome</keyword>
<keyword id="KW-0804">Transcription</keyword>
<keyword id="KW-0808">Transferase</keyword>
<keyword id="KW-0862">Zinc</keyword>
<keyword id="KW-0863">Zinc-finger</keyword>
<dbReference type="EC" id="2.7.7.101" evidence="1"/>
<dbReference type="EMBL" id="AE005176">
    <property type="protein sequence ID" value="AAK04650.1"/>
    <property type="molecule type" value="Genomic_DNA"/>
</dbReference>
<dbReference type="EMBL" id="D14690">
    <property type="protein sequence ID" value="BAA03516.1"/>
    <property type="molecule type" value="Genomic_DNA"/>
</dbReference>
<dbReference type="EMBL" id="D10168">
    <property type="protein sequence ID" value="BAA01037.1"/>
    <property type="molecule type" value="Genomic_DNA"/>
</dbReference>
<dbReference type="PIR" id="H86693">
    <property type="entry name" value="H86693"/>
</dbReference>
<dbReference type="PIR" id="JC2485">
    <property type="entry name" value="JC2485"/>
</dbReference>
<dbReference type="RefSeq" id="NP_266708.1">
    <property type="nucleotide sequence ID" value="NC_002662.1"/>
</dbReference>
<dbReference type="RefSeq" id="WP_003130831.1">
    <property type="nucleotide sequence ID" value="NC_002662.1"/>
</dbReference>
<dbReference type="SMR" id="Q04505"/>
<dbReference type="PaxDb" id="272623-L0269"/>
<dbReference type="EnsemblBacteria" id="AAK04650">
    <property type="protein sequence ID" value="AAK04650"/>
    <property type="gene ID" value="L0269"/>
</dbReference>
<dbReference type="KEGG" id="lla:L0269"/>
<dbReference type="PATRIC" id="fig|272623.7.peg.590"/>
<dbReference type="eggNOG" id="COG0358">
    <property type="taxonomic scope" value="Bacteria"/>
</dbReference>
<dbReference type="HOGENOM" id="CLU_013501_3_3_9"/>
<dbReference type="OrthoDB" id="9803773at2"/>
<dbReference type="Proteomes" id="UP000002196">
    <property type="component" value="Chromosome"/>
</dbReference>
<dbReference type="GO" id="GO:0005737">
    <property type="term" value="C:cytoplasm"/>
    <property type="evidence" value="ECO:0007669"/>
    <property type="project" value="TreeGrafter"/>
</dbReference>
<dbReference type="GO" id="GO:0000428">
    <property type="term" value="C:DNA-directed RNA polymerase complex"/>
    <property type="evidence" value="ECO:0007669"/>
    <property type="project" value="UniProtKB-KW"/>
</dbReference>
<dbReference type="GO" id="GO:1990077">
    <property type="term" value="C:primosome complex"/>
    <property type="evidence" value="ECO:0007669"/>
    <property type="project" value="UniProtKB-KW"/>
</dbReference>
<dbReference type="GO" id="GO:0003677">
    <property type="term" value="F:DNA binding"/>
    <property type="evidence" value="ECO:0007669"/>
    <property type="project" value="UniProtKB-KW"/>
</dbReference>
<dbReference type="GO" id="GO:0003899">
    <property type="term" value="F:DNA-directed RNA polymerase activity"/>
    <property type="evidence" value="ECO:0007669"/>
    <property type="project" value="InterPro"/>
</dbReference>
<dbReference type="GO" id="GO:0008270">
    <property type="term" value="F:zinc ion binding"/>
    <property type="evidence" value="ECO:0007669"/>
    <property type="project" value="UniProtKB-UniRule"/>
</dbReference>
<dbReference type="GO" id="GO:0006269">
    <property type="term" value="P:DNA replication, synthesis of primer"/>
    <property type="evidence" value="ECO:0007669"/>
    <property type="project" value="UniProtKB-UniRule"/>
</dbReference>
<dbReference type="CDD" id="cd03364">
    <property type="entry name" value="TOPRIM_DnaG_primases"/>
    <property type="match status" value="1"/>
</dbReference>
<dbReference type="FunFam" id="3.90.580.10:FF:000001">
    <property type="entry name" value="DNA primase"/>
    <property type="match status" value="1"/>
</dbReference>
<dbReference type="Gene3D" id="3.40.1360.10">
    <property type="match status" value="1"/>
</dbReference>
<dbReference type="Gene3D" id="3.90.980.10">
    <property type="entry name" value="DNA primase, catalytic core, N-terminal domain"/>
    <property type="match status" value="1"/>
</dbReference>
<dbReference type="Gene3D" id="1.10.860.10">
    <property type="entry name" value="DNAb Helicase, Chain A"/>
    <property type="match status" value="1"/>
</dbReference>
<dbReference type="Gene3D" id="3.90.580.10">
    <property type="entry name" value="Zinc finger, CHC2-type domain"/>
    <property type="match status" value="1"/>
</dbReference>
<dbReference type="HAMAP" id="MF_00974">
    <property type="entry name" value="DNA_primase_DnaG"/>
    <property type="match status" value="1"/>
</dbReference>
<dbReference type="InterPro" id="IPR016136">
    <property type="entry name" value="DNA_helicase_N/primase_C"/>
</dbReference>
<dbReference type="InterPro" id="IPR037068">
    <property type="entry name" value="DNA_primase_core_N_sf"/>
</dbReference>
<dbReference type="InterPro" id="IPR019475">
    <property type="entry name" value="DNA_primase_DnaB-bd"/>
</dbReference>
<dbReference type="InterPro" id="IPR006295">
    <property type="entry name" value="DNA_primase_DnaG"/>
</dbReference>
<dbReference type="InterPro" id="IPR036977">
    <property type="entry name" value="DNA_primase_Znf_CHC2"/>
</dbReference>
<dbReference type="InterPro" id="IPR030846">
    <property type="entry name" value="DnaG_bac"/>
</dbReference>
<dbReference type="InterPro" id="IPR013264">
    <property type="entry name" value="DNAG_N"/>
</dbReference>
<dbReference type="InterPro" id="IPR050219">
    <property type="entry name" value="DnaG_primase"/>
</dbReference>
<dbReference type="InterPro" id="IPR034151">
    <property type="entry name" value="TOPRIM_DnaG_bac"/>
</dbReference>
<dbReference type="InterPro" id="IPR006171">
    <property type="entry name" value="TOPRIM_dom"/>
</dbReference>
<dbReference type="InterPro" id="IPR002694">
    <property type="entry name" value="Znf_CHC2"/>
</dbReference>
<dbReference type="NCBIfam" id="TIGR01391">
    <property type="entry name" value="dnaG"/>
    <property type="match status" value="1"/>
</dbReference>
<dbReference type="PANTHER" id="PTHR30313">
    <property type="entry name" value="DNA PRIMASE"/>
    <property type="match status" value="1"/>
</dbReference>
<dbReference type="PANTHER" id="PTHR30313:SF2">
    <property type="entry name" value="DNA PRIMASE"/>
    <property type="match status" value="1"/>
</dbReference>
<dbReference type="Pfam" id="PF10410">
    <property type="entry name" value="DnaB_bind"/>
    <property type="match status" value="1"/>
</dbReference>
<dbReference type="Pfam" id="PF08275">
    <property type="entry name" value="DNAG_N"/>
    <property type="match status" value="1"/>
</dbReference>
<dbReference type="Pfam" id="PF13155">
    <property type="entry name" value="Toprim_2"/>
    <property type="match status" value="1"/>
</dbReference>
<dbReference type="Pfam" id="PF01807">
    <property type="entry name" value="Zn_ribbon_DnaG"/>
    <property type="match status" value="1"/>
</dbReference>
<dbReference type="PIRSF" id="PIRSF002811">
    <property type="entry name" value="DnaG"/>
    <property type="match status" value="1"/>
</dbReference>
<dbReference type="SMART" id="SM00493">
    <property type="entry name" value="TOPRIM"/>
    <property type="match status" value="1"/>
</dbReference>
<dbReference type="SMART" id="SM00400">
    <property type="entry name" value="ZnF_CHCC"/>
    <property type="match status" value="1"/>
</dbReference>
<dbReference type="SUPFAM" id="SSF56731">
    <property type="entry name" value="DNA primase core"/>
    <property type="match status" value="1"/>
</dbReference>
<dbReference type="SUPFAM" id="SSF57783">
    <property type="entry name" value="Zinc beta-ribbon"/>
    <property type="match status" value="1"/>
</dbReference>
<dbReference type="PROSITE" id="PS50880">
    <property type="entry name" value="TOPRIM"/>
    <property type="match status" value="1"/>
</dbReference>
<name>DNAG_LACLA</name>